<protein>
    <recommendedName>
        <fullName evidence="1">Cyanate hydratase</fullName>
        <shortName evidence="1">Cyanase</shortName>
        <ecNumber evidence="1">4.2.1.104</ecNumber>
    </recommendedName>
    <alternativeName>
        <fullName evidence="1">Cyanate hydrolase</fullName>
    </alternativeName>
    <alternativeName>
        <fullName evidence="1">Cyanate lyase</fullName>
    </alternativeName>
</protein>
<dbReference type="EC" id="4.2.1.104" evidence="1"/>
<dbReference type="EMBL" id="FM209186">
    <property type="protein sequence ID" value="CAW27996.1"/>
    <property type="molecule type" value="Genomic_DNA"/>
</dbReference>
<dbReference type="RefSeq" id="WP_003088707.1">
    <property type="nucleotide sequence ID" value="NC_011770.1"/>
</dbReference>
<dbReference type="SMR" id="B7VA51"/>
<dbReference type="KEGG" id="pag:PLES_32691"/>
<dbReference type="HOGENOM" id="CLU_103452_1_1_6"/>
<dbReference type="GO" id="GO:0008824">
    <property type="term" value="F:cyanate hydratase activity"/>
    <property type="evidence" value="ECO:0007669"/>
    <property type="project" value="UniProtKB-UniRule"/>
</dbReference>
<dbReference type="GO" id="GO:0003677">
    <property type="term" value="F:DNA binding"/>
    <property type="evidence" value="ECO:0007669"/>
    <property type="project" value="InterPro"/>
</dbReference>
<dbReference type="GO" id="GO:0009439">
    <property type="term" value="P:cyanate metabolic process"/>
    <property type="evidence" value="ECO:0007669"/>
    <property type="project" value="UniProtKB-UniRule"/>
</dbReference>
<dbReference type="CDD" id="cd00559">
    <property type="entry name" value="Cyanase_C"/>
    <property type="match status" value="1"/>
</dbReference>
<dbReference type="Gene3D" id="3.30.1160.10">
    <property type="entry name" value="Cyanate lyase, C-terminal domain"/>
    <property type="match status" value="1"/>
</dbReference>
<dbReference type="Gene3D" id="1.10.260.40">
    <property type="entry name" value="lambda repressor-like DNA-binding domains"/>
    <property type="match status" value="1"/>
</dbReference>
<dbReference type="HAMAP" id="MF_00535">
    <property type="entry name" value="Cyanate_hydrat"/>
    <property type="match status" value="1"/>
</dbReference>
<dbReference type="InterPro" id="IPR008076">
    <property type="entry name" value="Cyanase"/>
</dbReference>
<dbReference type="InterPro" id="IPR003712">
    <property type="entry name" value="Cyanate_lyase_C"/>
</dbReference>
<dbReference type="InterPro" id="IPR036581">
    <property type="entry name" value="Cyanate_lyase_C_sf"/>
</dbReference>
<dbReference type="InterPro" id="IPR048564">
    <property type="entry name" value="CYNS_N"/>
</dbReference>
<dbReference type="InterPro" id="IPR010982">
    <property type="entry name" value="Lambda_DNA-bd_dom_sf"/>
</dbReference>
<dbReference type="NCBIfam" id="TIGR00673">
    <property type="entry name" value="cynS"/>
    <property type="match status" value="1"/>
</dbReference>
<dbReference type="NCBIfam" id="NF002773">
    <property type="entry name" value="PRK02866.1"/>
    <property type="match status" value="1"/>
</dbReference>
<dbReference type="PANTHER" id="PTHR34186">
    <property type="entry name" value="CYANATE HYDRATASE"/>
    <property type="match status" value="1"/>
</dbReference>
<dbReference type="PANTHER" id="PTHR34186:SF2">
    <property type="entry name" value="CYANATE HYDRATASE"/>
    <property type="match status" value="1"/>
</dbReference>
<dbReference type="Pfam" id="PF02560">
    <property type="entry name" value="Cyanate_lyase"/>
    <property type="match status" value="1"/>
</dbReference>
<dbReference type="Pfam" id="PF21291">
    <property type="entry name" value="CYNS_N"/>
    <property type="match status" value="1"/>
</dbReference>
<dbReference type="PIRSF" id="PIRSF001263">
    <property type="entry name" value="Cyanate_hydratas"/>
    <property type="match status" value="1"/>
</dbReference>
<dbReference type="PRINTS" id="PR01693">
    <property type="entry name" value="CYANASE"/>
</dbReference>
<dbReference type="SMART" id="SM01116">
    <property type="entry name" value="Cyanate_lyase"/>
    <property type="match status" value="1"/>
</dbReference>
<dbReference type="SUPFAM" id="SSF55234">
    <property type="entry name" value="Cyanase C-terminal domain"/>
    <property type="match status" value="1"/>
</dbReference>
<dbReference type="SUPFAM" id="SSF47413">
    <property type="entry name" value="lambda repressor-like DNA-binding domains"/>
    <property type="match status" value="1"/>
</dbReference>
<name>CYNS_PSEA8</name>
<organism>
    <name type="scientific">Pseudomonas aeruginosa (strain LESB58)</name>
    <dbReference type="NCBI Taxonomy" id="557722"/>
    <lineage>
        <taxon>Bacteria</taxon>
        <taxon>Pseudomonadati</taxon>
        <taxon>Pseudomonadota</taxon>
        <taxon>Gammaproteobacteria</taxon>
        <taxon>Pseudomonadales</taxon>
        <taxon>Pseudomonadaceae</taxon>
        <taxon>Pseudomonas</taxon>
    </lineage>
</organism>
<accession>B7VA51</accession>
<keyword id="KW-0456">Lyase</keyword>
<gene>
    <name evidence="1" type="primary">cynS</name>
    <name type="ordered locus">PLES_32691</name>
</gene>
<comment type="function">
    <text evidence="1">Catalyzes the reaction of cyanate with bicarbonate to produce ammonia and carbon dioxide.</text>
</comment>
<comment type="catalytic activity">
    <reaction evidence="1">
        <text>cyanate + hydrogencarbonate + 3 H(+) = NH4(+) + 2 CO2</text>
        <dbReference type="Rhea" id="RHEA:11120"/>
        <dbReference type="ChEBI" id="CHEBI:15378"/>
        <dbReference type="ChEBI" id="CHEBI:16526"/>
        <dbReference type="ChEBI" id="CHEBI:17544"/>
        <dbReference type="ChEBI" id="CHEBI:28938"/>
        <dbReference type="ChEBI" id="CHEBI:29195"/>
        <dbReference type="EC" id="4.2.1.104"/>
    </reaction>
</comment>
<comment type="similarity">
    <text evidence="1">Belongs to the cyanase family.</text>
</comment>
<reference key="1">
    <citation type="journal article" date="2009" name="Genome Res.">
        <title>Newly introduced genomic prophage islands are critical determinants of in vivo competitiveness in the Liverpool epidemic strain of Pseudomonas aeruginosa.</title>
        <authorList>
            <person name="Winstanley C."/>
            <person name="Langille M.G.I."/>
            <person name="Fothergill J.L."/>
            <person name="Kukavica-Ibrulj I."/>
            <person name="Paradis-Bleau C."/>
            <person name="Sanschagrin F."/>
            <person name="Thomson N.R."/>
            <person name="Winsor G.L."/>
            <person name="Quail M.A."/>
            <person name="Lennard N."/>
            <person name="Bignell A."/>
            <person name="Clarke L."/>
            <person name="Seeger K."/>
            <person name="Saunders D."/>
            <person name="Harris D."/>
            <person name="Parkhill J."/>
            <person name="Hancock R.E.W."/>
            <person name="Brinkman F.S.L."/>
            <person name="Levesque R.C."/>
        </authorList>
    </citation>
    <scope>NUCLEOTIDE SEQUENCE [LARGE SCALE GENOMIC DNA]</scope>
    <source>
        <strain>LESB58</strain>
    </source>
</reference>
<evidence type="ECO:0000255" key="1">
    <source>
        <dbReference type="HAMAP-Rule" id="MF_00535"/>
    </source>
</evidence>
<sequence length="156" mass="16751">MQHSQVSPNARQQLAETVVLNKARLGLSWQDLADGTGLALTFVTAALLGQHALPEAAARKVAAQLGLDDDAVLLLQSIPLRGSIPGGIPSDPTIYRFYEMLQVYGSTLKALVHEQFGDGIISAINFKLDIKKVEDPEGGSRAVITLDGKYLPTKPF</sequence>
<feature type="chain" id="PRO_1000128231" description="Cyanate hydratase">
    <location>
        <begin position="1"/>
        <end position="156"/>
    </location>
</feature>
<feature type="active site" evidence="1">
    <location>
        <position position="96"/>
    </location>
</feature>
<feature type="active site" evidence="1">
    <location>
        <position position="99"/>
    </location>
</feature>
<feature type="active site" evidence="1">
    <location>
        <position position="122"/>
    </location>
</feature>
<proteinExistence type="inferred from homology"/>